<evidence type="ECO:0000250" key="1"/>
<evidence type="ECO:0000250" key="2">
    <source>
        <dbReference type="UniProtKB" id="Q15465"/>
    </source>
</evidence>
<evidence type="ECO:0000305" key="3"/>
<accession>O13234</accession>
<accession>O13190</accession>
<accession>O13199</accession>
<accession>O13239</accession>
<organism>
    <name type="scientific">Devario aequipinnatus</name>
    <name type="common">Giant danio</name>
    <name type="synonym">Danio aequipinnatus</name>
    <dbReference type="NCBI Taxonomy" id="46778"/>
    <lineage>
        <taxon>Eukaryota</taxon>
        <taxon>Metazoa</taxon>
        <taxon>Chordata</taxon>
        <taxon>Craniata</taxon>
        <taxon>Vertebrata</taxon>
        <taxon>Euteleostomi</taxon>
        <taxon>Actinopterygii</taxon>
        <taxon>Neopterygii</taxon>
        <taxon>Teleostei</taxon>
        <taxon>Ostariophysi</taxon>
        <taxon>Cypriniformes</taxon>
        <taxon>Danionidae</taxon>
        <taxon>Danioninae</taxon>
        <taxon>Devario</taxon>
    </lineage>
</organism>
<sequence>YGRRRHPKKLTPLAYKQFIPNVAEKTLGASGRYEGKITRNSERFKELTPNYNPDIIFKDEENTVMNHWPGVKLRVTEGWDEDGHHFEESLHYEGRAVDITTSDRDKSKYGTLSRLAVEAGF</sequence>
<keyword id="KW-0068">Autocatalytic cleavage</keyword>
<keyword id="KW-0106">Calcium</keyword>
<keyword id="KW-1003">Cell membrane</keyword>
<keyword id="KW-0217">Developmental protein</keyword>
<keyword id="KW-0378">Hydrolase</keyword>
<keyword id="KW-0449">Lipoprotein</keyword>
<keyword id="KW-0472">Membrane</keyword>
<keyword id="KW-0479">Metal-binding</keyword>
<keyword id="KW-0564">Palmitate</keyword>
<keyword id="KW-0645">Protease</keyword>
<keyword id="KW-0964">Secreted</keyword>
<keyword id="KW-0862">Zinc</keyword>
<proteinExistence type="inferred from homology"/>
<comment type="function">
    <text evidence="1">Intercellular signal essential for a variety of patterning events during development. Signal produced by the notochord that induces somite patterning, dorso-ventral patterning of the brain and early patterning of the developing eyes. Displays floor plate-inducing activity. Binds to the patched (PTC) receptor, which functions in association with smoothened (SMO), to activate the transcription of target genes. In the absence of SHH, PTC represses the constitutive signaling activity of SMO (By similarity).</text>
</comment>
<comment type="subunit">
    <text evidence="1">N-product is active as a multimer.</text>
</comment>
<comment type="subcellular location">
    <subcellularLocation>
        <location evidence="1">Secreted</location>
    </subcellularLocation>
    <subcellularLocation>
        <location evidence="1">Cell membrane</location>
    </subcellularLocation>
    <text evidence="1">Sonic hedgehog protein C-product: Secreted, extracellular space. Sonic hedgehog protein N-product: Cell membrane; Lipid-anchor. The C-terminal peptide diffuses from the cell, while the N-product either remains associated with lipid rafts at the cell surface, or forms freely diffusible active multimers with its hydrophobic lipid-modified N- and C-termini buried inside.</text>
</comment>
<comment type="domain">
    <text evidence="1">The sonic hedgehog protein N-product binds calcium and zinc ions; this stabilizes the protein fold and is essential for protein-protein interactions mediated by this domain.</text>
</comment>
<comment type="PTM">
    <text>The C-terminal domain displays an autoproteolysis activity and a cholesterol transferase activity. Both activities result in the cleavage of the full-length protein and covalent attachment of a cholesterol moiety to the C-terminal of the newly generated N-terminal fragment (N-product). The N-product is the active species in both local and long-range signaling, whereas the C-product has no signaling activity.</text>
</comment>
<comment type="PTM">
    <text evidence="1">Cholesterylation is required for N-product targeting to lipid rafts and multimerization.</text>
</comment>
<comment type="PTM">
    <text evidence="1">N-palmitoylation is required for N-product multimerization and full activity.</text>
</comment>
<comment type="similarity">
    <text evidence="3">Belongs to the hedgehog family.</text>
</comment>
<dbReference type="EMBL" id="U51344">
    <property type="protein sequence ID" value="AAB38566.1"/>
    <property type="molecule type" value="Genomic_DNA"/>
</dbReference>
<dbReference type="EMBL" id="U51363">
    <property type="protein sequence ID" value="AAB38586.1"/>
    <property type="molecule type" value="Genomic_DNA"/>
</dbReference>
<dbReference type="SMR" id="O13234"/>
<dbReference type="GO" id="GO:0005615">
    <property type="term" value="C:extracellular space"/>
    <property type="evidence" value="ECO:0007669"/>
    <property type="project" value="TreeGrafter"/>
</dbReference>
<dbReference type="GO" id="GO:0005886">
    <property type="term" value="C:plasma membrane"/>
    <property type="evidence" value="ECO:0007669"/>
    <property type="project" value="UniProtKB-SubCell"/>
</dbReference>
<dbReference type="GO" id="GO:0005509">
    <property type="term" value="F:calcium ion binding"/>
    <property type="evidence" value="ECO:0007669"/>
    <property type="project" value="TreeGrafter"/>
</dbReference>
<dbReference type="GO" id="GO:0005113">
    <property type="term" value="F:patched binding"/>
    <property type="evidence" value="ECO:0007669"/>
    <property type="project" value="TreeGrafter"/>
</dbReference>
<dbReference type="GO" id="GO:0008233">
    <property type="term" value="F:peptidase activity"/>
    <property type="evidence" value="ECO:0007669"/>
    <property type="project" value="UniProtKB-KW"/>
</dbReference>
<dbReference type="GO" id="GO:0048513">
    <property type="term" value="P:animal organ development"/>
    <property type="evidence" value="ECO:0007669"/>
    <property type="project" value="UniProtKB-ARBA"/>
</dbReference>
<dbReference type="GO" id="GO:0048468">
    <property type="term" value="P:cell development"/>
    <property type="evidence" value="ECO:0007669"/>
    <property type="project" value="UniProtKB-ARBA"/>
</dbReference>
<dbReference type="GO" id="GO:0001708">
    <property type="term" value="P:cell fate specification"/>
    <property type="evidence" value="ECO:0007669"/>
    <property type="project" value="TreeGrafter"/>
</dbReference>
<dbReference type="GO" id="GO:0007267">
    <property type="term" value="P:cell-cell signaling"/>
    <property type="evidence" value="ECO:0007669"/>
    <property type="project" value="InterPro"/>
</dbReference>
<dbReference type="GO" id="GO:0007417">
    <property type="term" value="P:central nervous system development"/>
    <property type="evidence" value="ECO:0007669"/>
    <property type="project" value="UniProtKB-ARBA"/>
</dbReference>
<dbReference type="GO" id="GO:0030182">
    <property type="term" value="P:neuron differentiation"/>
    <property type="evidence" value="ECO:0007669"/>
    <property type="project" value="UniProtKB-ARBA"/>
</dbReference>
<dbReference type="GO" id="GO:0006508">
    <property type="term" value="P:proteolysis"/>
    <property type="evidence" value="ECO:0007669"/>
    <property type="project" value="UniProtKB-KW"/>
</dbReference>
<dbReference type="GO" id="GO:0010468">
    <property type="term" value="P:regulation of gene expression"/>
    <property type="evidence" value="ECO:0007669"/>
    <property type="project" value="TreeGrafter"/>
</dbReference>
<dbReference type="GO" id="GO:0007224">
    <property type="term" value="P:smoothened signaling pathway"/>
    <property type="evidence" value="ECO:0007669"/>
    <property type="project" value="TreeGrafter"/>
</dbReference>
<dbReference type="GO" id="GO:0009888">
    <property type="term" value="P:tissue development"/>
    <property type="evidence" value="ECO:0007669"/>
    <property type="project" value="UniProtKB-ARBA"/>
</dbReference>
<dbReference type="Gene3D" id="3.30.1380.10">
    <property type="match status" value="1"/>
</dbReference>
<dbReference type="InterPro" id="IPR001657">
    <property type="entry name" value="Hedgehog"/>
</dbReference>
<dbReference type="InterPro" id="IPR009045">
    <property type="entry name" value="Hedgehog_sig/DD-Pept_Zn-bd_sf"/>
</dbReference>
<dbReference type="InterPro" id="IPR050387">
    <property type="entry name" value="Hedgehog_Signaling"/>
</dbReference>
<dbReference type="InterPro" id="IPR000320">
    <property type="entry name" value="Hedgehog_signalling_dom"/>
</dbReference>
<dbReference type="PANTHER" id="PTHR11889">
    <property type="entry name" value="HEDGEHOG"/>
    <property type="match status" value="1"/>
</dbReference>
<dbReference type="PANTHER" id="PTHR11889:SF36">
    <property type="entry name" value="SONIC HEDGEHOG PROTEIN"/>
    <property type="match status" value="1"/>
</dbReference>
<dbReference type="Pfam" id="PF01085">
    <property type="entry name" value="HH_signal"/>
    <property type="match status" value="1"/>
</dbReference>
<dbReference type="PRINTS" id="PR00632">
    <property type="entry name" value="SONICHHOG"/>
</dbReference>
<dbReference type="SUPFAM" id="SSF55166">
    <property type="entry name" value="Hedgehog/DD-peptidase"/>
    <property type="match status" value="1"/>
</dbReference>
<gene>
    <name type="primary">shh</name>
</gene>
<reference key="1">
    <citation type="journal article" date="1996" name="Proc. Natl. Acad. Sci. U.S.A.">
        <title>Evolutionary analyses of hedgehog and Hoxd-10 genes in fish species closely related to the zebrafish.</title>
        <authorList>
            <person name="Zardoya R."/>
            <person name="Abouheif E."/>
            <person name="Meyer A."/>
        </authorList>
    </citation>
    <scope>NUCLEOTIDE SEQUENCE [GENOMIC DNA]</scope>
    <source>
        <tissue>Muscle</tissue>
    </source>
</reference>
<name>SHH_DEVAE</name>
<feature type="chain" id="PRO_0000058724" description="Sonic hedgehog protein">
    <location>
        <begin position="1" status="less than"/>
        <end position="121" status="greater than"/>
    </location>
</feature>
<feature type="binding site" evidence="2">
    <location>
        <position position="60"/>
    </location>
    <ligand>
        <name>Ca(2+)</name>
        <dbReference type="ChEBI" id="CHEBI:29108"/>
        <label>1</label>
    </ligand>
</feature>
<feature type="binding site" evidence="2">
    <location>
        <position position="61"/>
    </location>
    <ligand>
        <name>Ca(2+)</name>
        <dbReference type="ChEBI" id="CHEBI:29108"/>
        <label>1</label>
    </ligand>
</feature>
<feature type="binding site" evidence="2">
    <location>
        <position position="61"/>
    </location>
    <ligand>
        <name>Ca(2+)</name>
        <dbReference type="ChEBI" id="CHEBI:29108"/>
        <label>2</label>
    </ligand>
</feature>
<feature type="binding site" evidence="2">
    <location>
        <position position="76"/>
    </location>
    <ligand>
        <name>Ca(2+)</name>
        <dbReference type="ChEBI" id="CHEBI:29108"/>
        <label>1</label>
    </ligand>
</feature>
<feature type="binding site" evidence="2">
    <location>
        <position position="77"/>
    </location>
    <ligand>
        <name>Ca(2+)</name>
        <dbReference type="ChEBI" id="CHEBI:29108"/>
        <label>1</label>
    </ligand>
</feature>
<feature type="binding site" evidence="2">
    <location>
        <position position="77"/>
    </location>
    <ligand>
        <name>Ca(2+)</name>
        <dbReference type="ChEBI" id="CHEBI:29108"/>
        <label>2</label>
    </ligand>
</feature>
<feature type="binding site" evidence="2">
    <location>
        <position position="80"/>
    </location>
    <ligand>
        <name>Ca(2+)</name>
        <dbReference type="ChEBI" id="CHEBI:29108"/>
        <label>2</label>
    </ligand>
</feature>
<feature type="binding site" evidence="2">
    <location>
        <position position="82"/>
    </location>
    <ligand>
        <name>Ca(2+)</name>
        <dbReference type="ChEBI" id="CHEBI:29108"/>
        <label>2</label>
    </ligand>
</feature>
<feature type="binding site" evidence="2">
    <location>
        <position position="91"/>
    </location>
    <ligand>
        <name>Zn(2+)</name>
        <dbReference type="ChEBI" id="CHEBI:29105"/>
    </ligand>
</feature>
<feature type="binding site" evidence="2">
    <location>
        <position position="98"/>
    </location>
    <ligand>
        <name>Zn(2+)</name>
        <dbReference type="ChEBI" id="CHEBI:29105"/>
    </ligand>
</feature>
<feature type="non-consecutive residues" evidence="3">
    <location>
        <begin position="63"/>
        <end position="64"/>
    </location>
</feature>
<feature type="non-terminal residue">
    <location>
        <position position="1"/>
    </location>
</feature>
<feature type="non-terminal residue">
    <location>
        <position position="121"/>
    </location>
</feature>
<protein>
    <recommendedName>
        <fullName>Sonic hedgehog protein</fullName>
        <shortName>SHH</shortName>
    </recommendedName>
</protein>